<accession>Q9LVQ4</accession>
<accession>Q4PSB2</accession>
<accession>Q5XUZ0</accession>
<protein>
    <recommendedName>
        <fullName>WEB family protein At5g55860</fullName>
    </recommendedName>
</protein>
<keyword id="KW-0175">Coiled coil</keyword>
<keyword id="KW-1185">Reference proteome</keyword>
<comment type="similarity">
    <text evidence="3">Belongs to the WEB family.</text>
</comment>
<evidence type="ECO:0000255" key="1"/>
<evidence type="ECO:0000256" key="2">
    <source>
        <dbReference type="SAM" id="MobiDB-lite"/>
    </source>
</evidence>
<evidence type="ECO:0000305" key="3"/>
<dbReference type="EMBL" id="AB018120">
    <property type="protein sequence ID" value="BAA97285.1"/>
    <property type="molecule type" value="Genomic_DNA"/>
</dbReference>
<dbReference type="EMBL" id="CP002688">
    <property type="protein sequence ID" value="AED96692.1"/>
    <property type="molecule type" value="Genomic_DNA"/>
</dbReference>
<dbReference type="EMBL" id="DQ056724">
    <property type="protein sequence ID" value="AAY78868.1"/>
    <property type="molecule type" value="mRNA"/>
</dbReference>
<dbReference type="EMBL" id="AY735732">
    <property type="protein sequence ID" value="AAU44602.1"/>
    <property type="molecule type" value="mRNA"/>
</dbReference>
<dbReference type="RefSeq" id="NP_200397.1">
    <property type="nucleotide sequence ID" value="NM_124968.3"/>
</dbReference>
<dbReference type="SMR" id="Q9LVQ4"/>
<dbReference type="BioGRID" id="20925">
    <property type="interactions" value="2"/>
</dbReference>
<dbReference type="FunCoup" id="Q9LVQ4">
    <property type="interactions" value="586"/>
</dbReference>
<dbReference type="STRING" id="3702.Q9LVQ4"/>
<dbReference type="iPTMnet" id="Q9LVQ4"/>
<dbReference type="PaxDb" id="3702-AT5G55860.1"/>
<dbReference type="ProteomicsDB" id="242894"/>
<dbReference type="EnsemblPlants" id="AT5G55860.1">
    <property type="protein sequence ID" value="AT5G55860.1"/>
    <property type="gene ID" value="AT5G55860"/>
</dbReference>
<dbReference type="GeneID" id="835681"/>
<dbReference type="Gramene" id="AT5G55860.1">
    <property type="protein sequence ID" value="AT5G55860.1"/>
    <property type="gene ID" value="AT5G55860"/>
</dbReference>
<dbReference type="KEGG" id="ath:AT5G55860"/>
<dbReference type="Araport" id="AT5G55860"/>
<dbReference type="TAIR" id="AT5G55860">
    <property type="gene designation" value="TREPH1"/>
</dbReference>
<dbReference type="eggNOG" id="ENOG502QQFI">
    <property type="taxonomic scope" value="Eukaryota"/>
</dbReference>
<dbReference type="HOGENOM" id="CLU_027385_0_0_1"/>
<dbReference type="InParanoid" id="Q9LVQ4"/>
<dbReference type="OMA" id="RQFEEYA"/>
<dbReference type="PhylomeDB" id="Q9LVQ4"/>
<dbReference type="PRO" id="PR:Q9LVQ4"/>
<dbReference type="Proteomes" id="UP000006548">
    <property type="component" value="Chromosome 5"/>
</dbReference>
<dbReference type="ExpressionAtlas" id="Q9LVQ4">
    <property type="expression patterns" value="baseline and differential"/>
</dbReference>
<dbReference type="GO" id="GO:0009536">
    <property type="term" value="C:plastid"/>
    <property type="evidence" value="ECO:0007005"/>
    <property type="project" value="TAIR"/>
</dbReference>
<dbReference type="GO" id="GO:0071260">
    <property type="term" value="P:cellular response to mechanical stimulus"/>
    <property type="evidence" value="ECO:0000315"/>
    <property type="project" value="TAIR"/>
</dbReference>
<dbReference type="InterPro" id="IPR008545">
    <property type="entry name" value="Web"/>
</dbReference>
<dbReference type="PANTHER" id="PTHR32054:SF3">
    <property type="entry name" value="HEAVY CHAIN, PUTATIVE, EXPRESSED-RELATED"/>
    <property type="match status" value="1"/>
</dbReference>
<dbReference type="PANTHER" id="PTHR32054">
    <property type="entry name" value="HEAVY CHAIN, PUTATIVE, EXPRESSED-RELATED-RELATED"/>
    <property type="match status" value="1"/>
</dbReference>
<dbReference type="Pfam" id="PF05701">
    <property type="entry name" value="WEMBL"/>
    <property type="match status" value="1"/>
</dbReference>
<reference key="1">
    <citation type="journal article" date="2000" name="DNA Res.">
        <title>Structural analysis of Arabidopsis thaliana chromosome 5. X. Sequence features of the regions of 3,076,755 bp covered by sixty P1 and TAC clones.</title>
        <authorList>
            <person name="Sato S."/>
            <person name="Nakamura Y."/>
            <person name="Kaneko T."/>
            <person name="Katoh T."/>
            <person name="Asamizu E."/>
            <person name="Kotani H."/>
            <person name="Tabata S."/>
        </authorList>
    </citation>
    <scope>NUCLEOTIDE SEQUENCE [LARGE SCALE GENOMIC DNA]</scope>
    <source>
        <strain>cv. Columbia</strain>
    </source>
</reference>
<reference key="2">
    <citation type="journal article" date="2017" name="Plant J.">
        <title>Araport11: a complete reannotation of the Arabidopsis thaliana reference genome.</title>
        <authorList>
            <person name="Cheng C.Y."/>
            <person name="Krishnakumar V."/>
            <person name="Chan A.P."/>
            <person name="Thibaud-Nissen F."/>
            <person name="Schobel S."/>
            <person name="Town C.D."/>
        </authorList>
    </citation>
    <scope>GENOME REANNOTATION</scope>
    <source>
        <strain>cv. Columbia</strain>
    </source>
</reference>
<reference key="3">
    <citation type="journal article" date="2006" name="Plant Biotechnol. J.">
        <title>Simultaneous high-throughput recombinational cloning of open reading frames in closed and open configurations.</title>
        <authorList>
            <person name="Underwood B.A."/>
            <person name="Vanderhaeghen R."/>
            <person name="Whitford R."/>
            <person name="Town C.D."/>
            <person name="Hilson P."/>
        </authorList>
    </citation>
    <scope>NUCLEOTIDE SEQUENCE [LARGE SCALE MRNA]</scope>
    <source>
        <strain>cv. Columbia</strain>
    </source>
</reference>
<reference key="4">
    <citation type="submission" date="2007-08" db="EMBL/GenBank/DDBJ databases">
        <title>Reconstruction of cDNA sequences for hypothetical genes in Arabidopsis thaliana from 5' and 3' RACE products.</title>
        <authorList>
            <person name="Xiao Y.-L."/>
            <person name="Underwood B.A."/>
            <person name="Moskal W.A. Jr."/>
            <person name="Wang W."/>
            <person name="Redman J.C."/>
            <person name="Wu H.C."/>
            <person name="Utterback T."/>
            <person name="Town C.D."/>
        </authorList>
    </citation>
    <scope>NUCLEOTIDE SEQUENCE [LARGE SCALE MRNA]</scope>
    <source>
        <strain>cv. Columbia</strain>
    </source>
</reference>
<reference key="5">
    <citation type="journal article" date="2009" name="J. Proteomics">
        <title>Phosphoproteomic analysis of nuclei-enriched fractions from Arabidopsis thaliana.</title>
        <authorList>
            <person name="Jones A.M.E."/>
            <person name="MacLean D."/>
            <person name="Studholme D.J."/>
            <person name="Serna-Sanz A."/>
            <person name="Andreasson E."/>
            <person name="Rathjen J.P."/>
            <person name="Peck S.C."/>
        </authorList>
    </citation>
    <scope>IDENTIFICATION BY MASS SPECTROMETRY [LARGE SCALE ANALYSIS]</scope>
    <source>
        <strain>cv. Columbia</strain>
    </source>
</reference>
<proteinExistence type="evidence at protein level"/>
<sequence>MVAKKGRRDSSDSSPIVEVGEIDTSAPFQSVKDAVNLFGEAAFSAEKPVFRKPNPQSAEKVLVKQTELHLAQKELNKLKEQLKNAETIREQALSELEWSKRTVDELTRKLEAVNESRDSANKATEAAKSLIEEAKPGNVSVASSSDAQTRDMEEYGEVCKELDTAKQELRKIRQVSNEILETKTVALSKVEEAKKVSKVHSEKIELLRKEIAAVNESVEQTKLACSQARKEQSEIFAEKEIQQKSYKAGMEESAKKSLALKNEFDPEFAKKLEVQLTETYNEIDELQKQMETAKASDIDSVNGVSLELNEAKGLFEKLVEEEKSLQELVESLKAELKNVKMEHDEVEAKEAEIESVAGDLHLKLSRSKSELEQCVTEESKAKAALEDMMLTINQISSETEAARREAEGMRNKAKELMKEAESAHLALEDSELHLRVALDEAEEAKAAETKALEQIKSMSEKTNAARNSTSSESGSQSITLSQEEFKSLSKRAEVFDKLAEMKVAAALAQVEAVRASENETLKKLETTQEEIKKLKTATEEALKKAAMADAAKKAVEGELRRWRERDQKKAEEAATRILAEAEMKMASESSPQQHYKAPKQKPVNNKLEKTKTSVVSKKVLMPNLSGIFNRKKNQVEWGSPSYLPGEKPF</sequence>
<gene>
    <name type="ordered locus">At5g55860</name>
    <name type="ORF">MWJ3.4</name>
</gene>
<feature type="chain" id="PRO_0000414079" description="WEB family protein At5g55860">
    <location>
        <begin position="1"/>
        <end position="649"/>
    </location>
</feature>
<feature type="region of interest" description="Disordered" evidence="2">
    <location>
        <begin position="443"/>
        <end position="483"/>
    </location>
</feature>
<feature type="region of interest" description="Disordered" evidence="2">
    <location>
        <begin position="583"/>
        <end position="611"/>
    </location>
</feature>
<feature type="coiled-coil region" evidence="1">
    <location>
        <begin position="59"/>
        <end position="227"/>
    </location>
</feature>
<feature type="coiled-coil region" evidence="1">
    <location>
        <begin position="267"/>
        <end position="356"/>
    </location>
</feature>
<feature type="coiled-coil region" evidence="1">
    <location>
        <begin position="391"/>
        <end position="461"/>
    </location>
</feature>
<feature type="coiled-coil region" evidence="1">
    <location>
        <begin position="505"/>
        <end position="549"/>
    </location>
</feature>
<feature type="compositionally biased region" description="Basic and acidic residues" evidence="2">
    <location>
        <begin position="443"/>
        <end position="453"/>
    </location>
</feature>
<feature type="compositionally biased region" description="Polar residues" evidence="2">
    <location>
        <begin position="456"/>
        <end position="467"/>
    </location>
</feature>
<feature type="compositionally biased region" description="Low complexity" evidence="2">
    <location>
        <begin position="468"/>
        <end position="482"/>
    </location>
</feature>
<feature type="sequence conflict" description="In Ref. 4; AAU44602." evidence="3" ref="4">
    <original>E</original>
    <variation>G</variation>
    <location>
        <position position="153"/>
    </location>
</feature>
<feature type="sequence conflict" description="In Ref. 3; AAY78868." evidence="3" ref="3">
    <original>Y</original>
    <variation>H</variation>
    <location>
        <position position="280"/>
    </location>
</feature>
<organism>
    <name type="scientific">Arabidopsis thaliana</name>
    <name type="common">Mouse-ear cress</name>
    <dbReference type="NCBI Taxonomy" id="3702"/>
    <lineage>
        <taxon>Eukaryota</taxon>
        <taxon>Viridiplantae</taxon>
        <taxon>Streptophyta</taxon>
        <taxon>Embryophyta</taxon>
        <taxon>Tracheophyta</taxon>
        <taxon>Spermatophyta</taxon>
        <taxon>Magnoliopsida</taxon>
        <taxon>eudicotyledons</taxon>
        <taxon>Gunneridae</taxon>
        <taxon>Pentapetalae</taxon>
        <taxon>rosids</taxon>
        <taxon>malvids</taxon>
        <taxon>Brassicales</taxon>
        <taxon>Brassicaceae</taxon>
        <taxon>Camelineae</taxon>
        <taxon>Arabidopsis</taxon>
    </lineage>
</organism>
<name>Y5586_ARATH</name>